<evidence type="ECO:0000250" key="1"/>
<evidence type="ECO:0000255" key="2"/>
<evidence type="ECO:0000255" key="3">
    <source>
        <dbReference type="PROSITE-ProRule" id="PRU10095"/>
    </source>
</evidence>
<evidence type="ECO:0000305" key="4"/>
<keyword id="KW-0325">Glycoprotein</keyword>
<keyword id="KW-0378">Hydrolase</keyword>
<keyword id="KW-0479">Metal-binding</keyword>
<keyword id="KW-0482">Metalloprotease</keyword>
<keyword id="KW-0645">Protease</keyword>
<keyword id="KW-1185">Reference proteome</keyword>
<keyword id="KW-0964">Secreted</keyword>
<keyword id="KW-0732">Signal</keyword>
<keyword id="KW-0862">Zinc</keyword>
<keyword id="KW-0865">Zymogen</keyword>
<comment type="function">
    <text evidence="1">Secreted metalloproteinase that allows assimilation of proteinaceous substrates.</text>
</comment>
<comment type="cofactor">
    <cofactor evidence="1">
        <name>Zn(2+)</name>
        <dbReference type="ChEBI" id="CHEBI:29105"/>
    </cofactor>
    <text evidence="1">Binds 1 zinc ion per subunit.</text>
</comment>
<comment type="subcellular location">
    <subcellularLocation>
        <location evidence="1">Secreted</location>
    </subcellularLocation>
</comment>
<comment type="similarity">
    <text evidence="4">Belongs to the peptidase M36 family.</text>
</comment>
<name>MEP_ASPNC</name>
<reference key="1">
    <citation type="journal article" date="2007" name="Nat. Biotechnol.">
        <title>Genome sequencing and analysis of the versatile cell factory Aspergillus niger CBS 513.88.</title>
        <authorList>
            <person name="Pel H.J."/>
            <person name="de Winde J.H."/>
            <person name="Archer D.B."/>
            <person name="Dyer P.S."/>
            <person name="Hofmann G."/>
            <person name="Schaap P.J."/>
            <person name="Turner G."/>
            <person name="de Vries R.P."/>
            <person name="Albang R."/>
            <person name="Albermann K."/>
            <person name="Andersen M.R."/>
            <person name="Bendtsen J.D."/>
            <person name="Benen J.A.E."/>
            <person name="van den Berg M."/>
            <person name="Breestraat S."/>
            <person name="Caddick M.X."/>
            <person name="Contreras R."/>
            <person name="Cornell M."/>
            <person name="Coutinho P.M."/>
            <person name="Danchin E.G.J."/>
            <person name="Debets A.J.M."/>
            <person name="Dekker P."/>
            <person name="van Dijck P.W.M."/>
            <person name="van Dijk A."/>
            <person name="Dijkhuizen L."/>
            <person name="Driessen A.J.M."/>
            <person name="d'Enfert C."/>
            <person name="Geysens S."/>
            <person name="Goosen C."/>
            <person name="Groot G.S.P."/>
            <person name="de Groot P.W.J."/>
            <person name="Guillemette T."/>
            <person name="Henrissat B."/>
            <person name="Herweijer M."/>
            <person name="van den Hombergh J.P.T.W."/>
            <person name="van den Hondel C.A.M.J.J."/>
            <person name="van der Heijden R.T.J.M."/>
            <person name="van der Kaaij R.M."/>
            <person name="Klis F.M."/>
            <person name="Kools H.J."/>
            <person name="Kubicek C.P."/>
            <person name="van Kuyk P.A."/>
            <person name="Lauber J."/>
            <person name="Lu X."/>
            <person name="van der Maarel M.J.E.C."/>
            <person name="Meulenberg R."/>
            <person name="Menke H."/>
            <person name="Mortimer M.A."/>
            <person name="Nielsen J."/>
            <person name="Oliver S.G."/>
            <person name="Olsthoorn M."/>
            <person name="Pal K."/>
            <person name="van Peij N.N.M.E."/>
            <person name="Ram A.F.J."/>
            <person name="Rinas U."/>
            <person name="Roubos J.A."/>
            <person name="Sagt C.M.J."/>
            <person name="Schmoll M."/>
            <person name="Sun J."/>
            <person name="Ussery D."/>
            <person name="Varga J."/>
            <person name="Vervecken W."/>
            <person name="van de Vondervoort P.J.J."/>
            <person name="Wedler H."/>
            <person name="Woesten H.A.B."/>
            <person name="Zeng A.-P."/>
            <person name="van Ooyen A.J.J."/>
            <person name="Visser J."/>
            <person name="Stam H."/>
        </authorList>
    </citation>
    <scope>NUCLEOTIDE SEQUENCE [LARGE SCALE GENOMIC DNA]</scope>
    <source>
        <strain>ATCC MYA-4892 / CBS 513.88 / FGSC A1513</strain>
    </source>
</reference>
<protein>
    <recommendedName>
        <fullName>Extracellular metalloproteinase mep</fullName>
        <ecNumber>3.4.24.-</ecNumber>
    </recommendedName>
    <alternativeName>
        <fullName>Elastinolytic metalloproteinase mep</fullName>
    </alternativeName>
    <alternativeName>
        <fullName>Fungalysin mep</fullName>
    </alternativeName>
</protein>
<proteinExistence type="inferred from homology"/>
<gene>
    <name type="primary">mep</name>
    <name type="ORF">An01g02070</name>
</gene>
<sequence length="631" mass="69153">MHGLRLVCSIGTLPLVILAYPAASLHTTSAAVDLDSLRLTSNSEYVNSVHVDTNRSVAVSAEEHYTDTAARLVQNIVPGASFRLIDDHFVGDNGVAHVYFRQTLHGIDIDNADFNVNIGKDGLVLSFGHSFFTGALPSSHLDNTNVLSPEAALRGARDAIQLPLTIDNVSTEAAEGRNEYIFREAVGAVSDPKAKLVYLVKPEGTLALTWRIETDMYEHWLLTYIDAETTTVHGVVDYVADATYQVYPWGTNDPAEGHRTIVTDPWDLSASAYTWISDGRDNYTTTRGNNAIAHWNPTGGGSYLYNLRPSDPNLNFQWPYSPNMSPPRSYINASIVQLFYTANAYHDLLYTLGFTESAGNFQWNNSAHGGRDKDYVILNAQDGSGFSNANFATPPDGIPGRMRMYIWIESTPSRDGSFDAGIVIHEYTHGVSNRLTGGSHNAGCLSALESGGMGEGWGDFMATAIRIKPNDTRTTSYTMGAWADNDKCGVRDYPYSTSFTENPLNYTSVNTMNGVHAIGTVWATMLYEVLWNLIDKYGKNDGSRPVFRNGVPTDGKYLMMKLVVDGMALQPCNPNFVQARDAILDADIVLTGGKNRCEIWRGFAKRGLGQGAAHSSLNWMRRGSTLLPTGC</sequence>
<feature type="signal peptide" evidence="2">
    <location>
        <begin position="1"/>
        <end position="19"/>
    </location>
</feature>
<feature type="propeptide" id="PRO_0000407178" evidence="1">
    <location>
        <begin position="20"/>
        <end position="241"/>
    </location>
</feature>
<feature type="chain" id="PRO_5000219322" description="Extracellular metalloproteinase mep">
    <location>
        <begin position="242"/>
        <end position="631"/>
    </location>
</feature>
<feature type="active site" evidence="3">
    <location>
        <position position="426"/>
    </location>
</feature>
<feature type="binding site" evidence="3">
    <location>
        <position position="425"/>
    </location>
    <ligand>
        <name>Zn(2+)</name>
        <dbReference type="ChEBI" id="CHEBI:29105"/>
        <note>catalytic</note>
    </ligand>
</feature>
<feature type="binding site" evidence="3">
    <location>
        <position position="429"/>
    </location>
    <ligand>
        <name>Zn(2+)</name>
        <dbReference type="ChEBI" id="CHEBI:29105"/>
        <note>catalytic</note>
    </ligand>
</feature>
<feature type="glycosylation site" description="N-linked (GlcNAc...) asparagine" evidence="2">
    <location>
        <position position="282"/>
    </location>
</feature>
<feature type="glycosylation site" description="N-linked (GlcNAc...) asparagine" evidence="2">
    <location>
        <position position="332"/>
    </location>
</feature>
<feature type="glycosylation site" description="N-linked (GlcNAc...) asparagine" evidence="2">
    <location>
        <position position="364"/>
    </location>
</feature>
<feature type="glycosylation site" description="N-linked (GlcNAc...) asparagine" evidence="2">
    <location>
        <position position="470"/>
    </location>
</feature>
<feature type="glycosylation site" description="N-linked (GlcNAc...) asparagine" evidence="2">
    <location>
        <position position="505"/>
    </location>
</feature>
<dbReference type="EC" id="3.4.24.-"/>
<dbReference type="EMBL" id="AM269955">
    <property type="protein sequence ID" value="CAK43577.1"/>
    <property type="molecule type" value="Genomic_DNA"/>
</dbReference>
<dbReference type="RefSeq" id="XP_001388645.1">
    <property type="nucleotide sequence ID" value="XM_001388608.1"/>
</dbReference>
<dbReference type="SMR" id="A2Q7V4"/>
<dbReference type="MEROPS" id="M36.001"/>
<dbReference type="GlyCosmos" id="A2Q7V4">
    <property type="glycosylation" value="5 sites, No reported glycans"/>
</dbReference>
<dbReference type="GeneID" id="4977749"/>
<dbReference type="KEGG" id="ang:An01g02070"/>
<dbReference type="VEuPathDB" id="FungiDB:An01g02070"/>
<dbReference type="HOGENOM" id="CLU_012703_3_0_1"/>
<dbReference type="Proteomes" id="UP000006706">
    <property type="component" value="Chromosome 2R"/>
</dbReference>
<dbReference type="GO" id="GO:0005576">
    <property type="term" value="C:extracellular region"/>
    <property type="evidence" value="ECO:0007669"/>
    <property type="project" value="UniProtKB-SubCell"/>
</dbReference>
<dbReference type="GO" id="GO:0004222">
    <property type="term" value="F:metalloendopeptidase activity"/>
    <property type="evidence" value="ECO:0007669"/>
    <property type="project" value="InterPro"/>
</dbReference>
<dbReference type="GO" id="GO:0008270">
    <property type="term" value="F:zinc ion binding"/>
    <property type="evidence" value="ECO:0007669"/>
    <property type="project" value="InterPro"/>
</dbReference>
<dbReference type="GO" id="GO:0006508">
    <property type="term" value="P:proteolysis"/>
    <property type="evidence" value="ECO:0007669"/>
    <property type="project" value="UniProtKB-KW"/>
</dbReference>
<dbReference type="CDD" id="cd09596">
    <property type="entry name" value="M36"/>
    <property type="match status" value="1"/>
</dbReference>
<dbReference type="Gene3D" id="3.10.170.10">
    <property type="match status" value="1"/>
</dbReference>
<dbReference type="Gene3D" id="1.10.390.10">
    <property type="entry name" value="Neutral Protease Domain 2"/>
    <property type="match status" value="1"/>
</dbReference>
<dbReference type="InterPro" id="IPR011096">
    <property type="entry name" value="FTP_domain"/>
</dbReference>
<dbReference type="InterPro" id="IPR050371">
    <property type="entry name" value="Fungal_virulence_M36"/>
</dbReference>
<dbReference type="InterPro" id="IPR001842">
    <property type="entry name" value="Peptidase_M36"/>
</dbReference>
<dbReference type="InterPro" id="IPR027268">
    <property type="entry name" value="Peptidase_M4/M1_CTD_sf"/>
</dbReference>
<dbReference type="PANTHER" id="PTHR33478">
    <property type="entry name" value="EXTRACELLULAR METALLOPROTEINASE MEP"/>
    <property type="match status" value="1"/>
</dbReference>
<dbReference type="PANTHER" id="PTHR33478:SF1">
    <property type="entry name" value="EXTRACELLULAR METALLOPROTEINASE MEP"/>
    <property type="match status" value="1"/>
</dbReference>
<dbReference type="Pfam" id="PF07504">
    <property type="entry name" value="FTP"/>
    <property type="match status" value="1"/>
</dbReference>
<dbReference type="Pfam" id="PF02128">
    <property type="entry name" value="Peptidase_M36"/>
    <property type="match status" value="1"/>
</dbReference>
<dbReference type="PRINTS" id="PR00999">
    <property type="entry name" value="FUNGALYSIN"/>
</dbReference>
<dbReference type="SUPFAM" id="SSF55486">
    <property type="entry name" value="Metalloproteases ('zincins'), catalytic domain"/>
    <property type="match status" value="1"/>
</dbReference>
<dbReference type="PROSITE" id="PS00142">
    <property type="entry name" value="ZINC_PROTEASE"/>
    <property type="match status" value="1"/>
</dbReference>
<organism>
    <name type="scientific">Aspergillus niger (strain ATCC MYA-4892 / CBS 513.88 / FGSC A1513)</name>
    <dbReference type="NCBI Taxonomy" id="425011"/>
    <lineage>
        <taxon>Eukaryota</taxon>
        <taxon>Fungi</taxon>
        <taxon>Dikarya</taxon>
        <taxon>Ascomycota</taxon>
        <taxon>Pezizomycotina</taxon>
        <taxon>Eurotiomycetes</taxon>
        <taxon>Eurotiomycetidae</taxon>
        <taxon>Eurotiales</taxon>
        <taxon>Aspergillaceae</taxon>
        <taxon>Aspergillus</taxon>
        <taxon>Aspergillus subgen. Circumdati</taxon>
    </lineage>
</organism>
<accession>A2Q7V4</accession>